<organism>
    <name type="scientific">Aquarana catesbeiana</name>
    <name type="common">American bullfrog</name>
    <name type="synonym">Rana catesbeiana</name>
    <dbReference type="NCBI Taxonomy" id="8400"/>
    <lineage>
        <taxon>Eukaryota</taxon>
        <taxon>Metazoa</taxon>
        <taxon>Chordata</taxon>
        <taxon>Craniata</taxon>
        <taxon>Vertebrata</taxon>
        <taxon>Euteleostomi</taxon>
        <taxon>Amphibia</taxon>
        <taxon>Batrachia</taxon>
        <taxon>Anura</taxon>
        <taxon>Neobatrachia</taxon>
        <taxon>Ranoidea</taxon>
        <taxon>Ranidae</taxon>
        <taxon>Aquarana</taxon>
    </lineage>
</organism>
<evidence type="ECO:0000255" key="1"/>
<evidence type="ECO:0000269" key="2">
    <source>
    </source>
</evidence>
<evidence type="ECO:0000305" key="3"/>
<gene>
    <name type="primary">GAST</name>
</gene>
<sequence>MDKKVCVSILLAMLAIAALCRPMTELESARHGAQRKNSISDVSRRDLLASLTHEQKQLIMSQLLPELLSELSNAEDHLHPMRDRDYAGWMDFGRRSSEVTES</sequence>
<dbReference type="EMBL" id="Y08399">
    <property type="protein sequence ID" value="CAA69676.1"/>
    <property type="molecule type" value="Genomic_DNA"/>
</dbReference>
<dbReference type="EMBL" id="Y08400">
    <property type="protein sequence ID" value="CAA69676.1"/>
    <property type="status" value="JOINED"/>
    <property type="molecule type" value="Genomic_DNA"/>
</dbReference>
<dbReference type="EMBL" id="Y08397">
    <property type="protein sequence ID" value="CAA69675.1"/>
    <property type="molecule type" value="mRNA"/>
</dbReference>
<dbReference type="PIR" id="S24142">
    <property type="entry name" value="S24142"/>
</dbReference>
<dbReference type="GO" id="GO:0030424">
    <property type="term" value="C:axon"/>
    <property type="evidence" value="ECO:0007669"/>
    <property type="project" value="TreeGrafter"/>
</dbReference>
<dbReference type="GO" id="GO:0005615">
    <property type="term" value="C:extracellular space"/>
    <property type="evidence" value="ECO:0007669"/>
    <property type="project" value="TreeGrafter"/>
</dbReference>
<dbReference type="GO" id="GO:0005184">
    <property type="term" value="F:neuropeptide hormone activity"/>
    <property type="evidence" value="ECO:0007669"/>
    <property type="project" value="InterPro"/>
</dbReference>
<dbReference type="GO" id="GO:0007586">
    <property type="term" value="P:digestion"/>
    <property type="evidence" value="ECO:0007669"/>
    <property type="project" value="UniProtKB-KW"/>
</dbReference>
<dbReference type="InterPro" id="IPR015499">
    <property type="entry name" value="CCK-like"/>
</dbReference>
<dbReference type="InterPro" id="IPR001651">
    <property type="entry name" value="Gastrin/CCK"/>
</dbReference>
<dbReference type="InterPro" id="IPR013152">
    <property type="entry name" value="Gastrin/cholecystokinin_CS"/>
</dbReference>
<dbReference type="PANTHER" id="PTHR10786">
    <property type="entry name" value="CHOLECYSTOKININ"/>
    <property type="match status" value="1"/>
</dbReference>
<dbReference type="PANTHER" id="PTHR10786:SF0">
    <property type="entry name" value="CHOLECYSTOKININ"/>
    <property type="match status" value="1"/>
</dbReference>
<dbReference type="Pfam" id="PF00918">
    <property type="entry name" value="Gastrin"/>
    <property type="match status" value="1"/>
</dbReference>
<dbReference type="PROSITE" id="PS00259">
    <property type="entry name" value="GASTRIN"/>
    <property type="match status" value="1"/>
</dbReference>
<protein>
    <recommendedName>
        <fullName>Gastrin/cholecystokinin-like peptide</fullName>
    </recommendedName>
    <alternativeName>
        <fullName>Antral peptide</fullName>
    </alternativeName>
</protein>
<keyword id="KW-0027">Amidation</keyword>
<keyword id="KW-0165">Cleavage on pair of basic residues</keyword>
<keyword id="KW-0222">Digestion</keyword>
<keyword id="KW-0903">Direct protein sequencing</keyword>
<keyword id="KW-0372">Hormone</keyword>
<keyword id="KW-0964">Secreted</keyword>
<keyword id="KW-0732">Signal</keyword>
<keyword id="KW-0765">Sulfation</keyword>
<comment type="function">
    <text>May control digestion processes.</text>
</comment>
<comment type="subcellular location">
    <subcellularLocation>
        <location>Secreted</location>
    </subcellularLocation>
</comment>
<comment type="tissue specificity">
    <text>Expressed in antrum, duodenum, colon, pancreas, brain and testis. No expression found in kidney, lung, liver, skin or distal two-thirds of small intestine. In the brain, strongly expressed in the pituitary gland with moderate expression in the neural lobe, brain stem and hypothalamus.</text>
</comment>
<comment type="similarity">
    <text evidence="3">Belongs to the gastrin/cholecystokinin family.</text>
</comment>
<feature type="signal peptide" evidence="1">
    <location>
        <begin position="1"/>
        <end position="20"/>
    </location>
</feature>
<feature type="propeptide" id="PRO_0000010659" evidence="2">
    <location>
        <begin position="21"/>
        <end position="45"/>
    </location>
</feature>
<feature type="peptide" id="PRO_0000010660" description="Gastrin/cholecystokinin-like peptide">
    <location>
        <begin position="46"/>
        <end position="92"/>
    </location>
</feature>
<feature type="propeptide" id="PRO_0000010661">
    <location>
        <begin position="96"/>
        <end position="102"/>
    </location>
</feature>
<feature type="modified residue" description="Sulfotyrosine" evidence="2">
    <location>
        <position position="86"/>
    </location>
</feature>
<feature type="modified residue" description="Phenylalanine amide" evidence="2">
    <location>
        <position position="92"/>
    </location>
</feature>
<reference key="1">
    <citation type="journal article" date="1997" name="Endocrinology">
        <title>Characterization of the cholecystokinin and gastrin genes from the bullfrog, Rana catesbeiana: evolutionary conservation of primary and secondary sites of gene expression.</title>
        <authorList>
            <person name="Rourke I.J."/>
            <person name="Rehfeld J.F."/>
            <person name="Moeller M."/>
            <person name="Johnson A.H."/>
        </authorList>
    </citation>
    <scope>NUCLEOTIDE SEQUENCE [GENOMIC DNA / MRNA]</scope>
</reference>
<reference key="2">
    <citation type="journal article" date="1992" name="Eur. J. Biochem.">
        <title>Identification of cholecystokinin/gastrin peptides in frog and turtle. Evidence that cholecystokinin is phylogenetically older than gastrin.</title>
        <authorList>
            <person name="Johnsen A.H."/>
            <person name="Rehfeld J.F."/>
        </authorList>
    </citation>
    <scope>PROTEIN SEQUENCE OF 46-92</scope>
    <scope>SULFATION AT TYR-86</scope>
    <scope>AMIDATION AT PHE-92</scope>
    <source>
        <tissue>Gastric mucosa</tissue>
    </source>
</reference>
<proteinExistence type="evidence at protein level"/>
<accession>P80111</accession>
<name>ANTR_AQUCT</name>